<comment type="subcellular location">
    <subcellularLocation>
        <location evidence="1">Nucleus</location>
        <location evidence="1">Nucleolus</location>
    </subcellularLocation>
</comment>
<comment type="similarity">
    <text evidence="4">Belongs to the AATF family.</text>
</comment>
<name>BFR2_SCHPO</name>
<evidence type="ECO:0000250" key="1"/>
<evidence type="ECO:0000256" key="2">
    <source>
        <dbReference type="SAM" id="MobiDB-lite"/>
    </source>
</evidence>
<evidence type="ECO:0000269" key="3">
    <source>
    </source>
</evidence>
<evidence type="ECO:0000305" key="4"/>
<dbReference type="EMBL" id="CU329670">
    <property type="protein sequence ID" value="CAB65809.1"/>
    <property type="molecule type" value="Genomic_DNA"/>
</dbReference>
<dbReference type="PIR" id="T50238">
    <property type="entry name" value="T50238"/>
</dbReference>
<dbReference type="RefSeq" id="NP_593456.1">
    <property type="nucleotide sequence ID" value="NM_001018889.2"/>
</dbReference>
<dbReference type="SMR" id="Q9US05"/>
<dbReference type="BioGRID" id="279957">
    <property type="interactions" value="6"/>
</dbReference>
<dbReference type="FunCoup" id="Q9US05">
    <property type="interactions" value="604"/>
</dbReference>
<dbReference type="STRING" id="284812.Q9US05"/>
<dbReference type="iPTMnet" id="Q9US05"/>
<dbReference type="PaxDb" id="4896-SPAC664.08c.1"/>
<dbReference type="EnsemblFungi" id="SPAC664.08c.1">
    <property type="protein sequence ID" value="SPAC664.08c.1:pep"/>
    <property type="gene ID" value="SPAC664.08c"/>
</dbReference>
<dbReference type="GeneID" id="2543540"/>
<dbReference type="KEGG" id="spo:2543540"/>
<dbReference type="PomBase" id="SPAC664.08c">
    <property type="gene designation" value="bfr2"/>
</dbReference>
<dbReference type="VEuPathDB" id="FungiDB:SPAC664.08c"/>
<dbReference type="eggNOG" id="KOG2773">
    <property type="taxonomic scope" value="Eukaryota"/>
</dbReference>
<dbReference type="HOGENOM" id="CLU_018299_2_1_1"/>
<dbReference type="InParanoid" id="Q9US05"/>
<dbReference type="OMA" id="GEHENNK"/>
<dbReference type="PhylomeDB" id="Q9US05"/>
<dbReference type="PRO" id="PR:Q9US05"/>
<dbReference type="Proteomes" id="UP000002485">
    <property type="component" value="Chromosome I"/>
</dbReference>
<dbReference type="GO" id="GO:0005730">
    <property type="term" value="C:nucleolus"/>
    <property type="evidence" value="ECO:0000318"/>
    <property type="project" value="GO_Central"/>
</dbReference>
<dbReference type="GO" id="GO:0005634">
    <property type="term" value="C:nucleus"/>
    <property type="evidence" value="ECO:0007005"/>
    <property type="project" value="PomBase"/>
</dbReference>
<dbReference type="GO" id="GO:0000462">
    <property type="term" value="P:maturation of SSU-rRNA from tricistronic rRNA transcript (SSU-rRNA, 5.8S rRNA, LSU-rRNA)"/>
    <property type="evidence" value="ECO:0000318"/>
    <property type="project" value="GO_Central"/>
</dbReference>
<dbReference type="InterPro" id="IPR025160">
    <property type="entry name" value="AATF"/>
</dbReference>
<dbReference type="InterPro" id="IPR039223">
    <property type="entry name" value="AATF/Bfr2"/>
</dbReference>
<dbReference type="InterPro" id="IPR012617">
    <property type="entry name" value="AATF_C"/>
</dbReference>
<dbReference type="PANTHER" id="PTHR15565">
    <property type="entry name" value="AATF PROTEIN APOPTOSIS ANTAGONIZING TRANSCRIPTION FACTOR"/>
    <property type="match status" value="1"/>
</dbReference>
<dbReference type="PANTHER" id="PTHR15565:SF0">
    <property type="entry name" value="PROTEIN AATF"/>
    <property type="match status" value="1"/>
</dbReference>
<dbReference type="Pfam" id="PF13339">
    <property type="entry name" value="AATF-Che1"/>
    <property type="match status" value="1"/>
</dbReference>
<dbReference type="Pfam" id="PF08164">
    <property type="entry name" value="TRAUB"/>
    <property type="match status" value="1"/>
</dbReference>
<organism>
    <name type="scientific">Schizosaccharomyces pombe (strain 972 / ATCC 24843)</name>
    <name type="common">Fission yeast</name>
    <dbReference type="NCBI Taxonomy" id="284812"/>
    <lineage>
        <taxon>Eukaryota</taxon>
        <taxon>Fungi</taxon>
        <taxon>Dikarya</taxon>
        <taxon>Ascomycota</taxon>
        <taxon>Taphrinomycotina</taxon>
        <taxon>Schizosaccharomycetes</taxon>
        <taxon>Schizosaccharomycetales</taxon>
        <taxon>Schizosaccharomycetaceae</taxon>
        <taxon>Schizosaccharomyces</taxon>
    </lineage>
</organism>
<gene>
    <name type="primary">bfr2</name>
    <name type="ORF">SPAC664.08c</name>
</gene>
<protein>
    <recommendedName>
        <fullName>Protein bfr2</fullName>
    </recommendedName>
</protein>
<accession>Q9US05</accession>
<feature type="chain" id="PRO_0000056631" description="Protein bfr2">
    <location>
        <begin position="1"/>
        <end position="452"/>
    </location>
</feature>
<feature type="region of interest" description="Disordered" evidence="2">
    <location>
        <begin position="1"/>
        <end position="141"/>
    </location>
</feature>
<feature type="compositionally biased region" description="Basic and acidic residues" evidence="2">
    <location>
        <begin position="1"/>
        <end position="10"/>
    </location>
</feature>
<feature type="compositionally biased region" description="Basic and acidic residues" evidence="2">
    <location>
        <begin position="19"/>
        <end position="34"/>
    </location>
</feature>
<feature type="compositionally biased region" description="Basic and acidic residues" evidence="2">
    <location>
        <begin position="43"/>
        <end position="57"/>
    </location>
</feature>
<feature type="compositionally biased region" description="Low complexity" evidence="2">
    <location>
        <begin position="78"/>
        <end position="92"/>
    </location>
</feature>
<feature type="compositionally biased region" description="Acidic residues" evidence="2">
    <location>
        <begin position="93"/>
        <end position="106"/>
    </location>
</feature>
<feature type="modified residue" description="Phosphoserine" evidence="3">
    <location>
        <position position="31"/>
    </location>
</feature>
<feature type="modified residue" description="Phosphoserine" evidence="3">
    <location>
        <position position="36"/>
    </location>
</feature>
<feature type="modified residue" description="Phosphoserine" evidence="3">
    <location>
        <position position="37"/>
    </location>
</feature>
<proteinExistence type="evidence at protein level"/>
<keyword id="KW-0539">Nucleus</keyword>
<keyword id="KW-0597">Phosphoprotein</keyword>
<keyword id="KW-1185">Reference proteome</keyword>
<sequence>MGKVSLKDELAGMLNPQPQERDPEALEDAFSDREDSSEEENDTLGREHYVDVSESKLRSKQAPQLDPKFKGRKTSRQELLNSGSLNSQSSSPSEEEDSEEDENDAVSEDHENFSSSEASSISEENEDDDQSSAIPEKDMDRLKKIINGEKKLSDQIRTSALEDMKKGLALKEQMRFYDNVLDTRIRLQKGCSQLLSSSNQLQGDKVEARDGLVSFIQHTLQLRKNLLIDSGVEILDSRSKRKENPVSLEEIALEMNNLDDSLNEWKNDTLTKWHNRVQAVQGISQSNKFKALNQSIVQQIENSMINKKDLVERTRIDYSDPNNKTFNPEIYNDTDFYQSLLKDFINSRMADSTRDGTVRWMATKKQKQKKENVDTKASKGRKIRYHVHDKLQNFMAPIEVTVWPDEQTEDLFSSLLGQQLDLSETANDTNTSNFVEKDDELISSNDGFSLFG</sequence>
<reference key="1">
    <citation type="journal article" date="2002" name="Nature">
        <title>The genome sequence of Schizosaccharomyces pombe.</title>
        <authorList>
            <person name="Wood V."/>
            <person name="Gwilliam R."/>
            <person name="Rajandream M.A."/>
            <person name="Lyne M.H."/>
            <person name="Lyne R."/>
            <person name="Stewart A."/>
            <person name="Sgouros J.G."/>
            <person name="Peat N."/>
            <person name="Hayles J."/>
            <person name="Baker S.G."/>
            <person name="Basham D."/>
            <person name="Bowman S."/>
            <person name="Brooks K."/>
            <person name="Brown D."/>
            <person name="Brown S."/>
            <person name="Chillingworth T."/>
            <person name="Churcher C.M."/>
            <person name="Collins M."/>
            <person name="Connor R."/>
            <person name="Cronin A."/>
            <person name="Davis P."/>
            <person name="Feltwell T."/>
            <person name="Fraser A."/>
            <person name="Gentles S."/>
            <person name="Goble A."/>
            <person name="Hamlin N."/>
            <person name="Harris D.E."/>
            <person name="Hidalgo J."/>
            <person name="Hodgson G."/>
            <person name="Holroyd S."/>
            <person name="Hornsby T."/>
            <person name="Howarth S."/>
            <person name="Huckle E.J."/>
            <person name="Hunt S."/>
            <person name="Jagels K."/>
            <person name="James K.D."/>
            <person name="Jones L."/>
            <person name="Jones M."/>
            <person name="Leather S."/>
            <person name="McDonald S."/>
            <person name="McLean J."/>
            <person name="Mooney P."/>
            <person name="Moule S."/>
            <person name="Mungall K.L."/>
            <person name="Murphy L.D."/>
            <person name="Niblett D."/>
            <person name="Odell C."/>
            <person name="Oliver K."/>
            <person name="O'Neil S."/>
            <person name="Pearson D."/>
            <person name="Quail M.A."/>
            <person name="Rabbinowitsch E."/>
            <person name="Rutherford K.M."/>
            <person name="Rutter S."/>
            <person name="Saunders D."/>
            <person name="Seeger K."/>
            <person name="Sharp S."/>
            <person name="Skelton J."/>
            <person name="Simmonds M.N."/>
            <person name="Squares R."/>
            <person name="Squares S."/>
            <person name="Stevens K."/>
            <person name="Taylor K."/>
            <person name="Taylor R.G."/>
            <person name="Tivey A."/>
            <person name="Walsh S.V."/>
            <person name="Warren T."/>
            <person name="Whitehead S."/>
            <person name="Woodward J.R."/>
            <person name="Volckaert G."/>
            <person name="Aert R."/>
            <person name="Robben J."/>
            <person name="Grymonprez B."/>
            <person name="Weltjens I."/>
            <person name="Vanstreels E."/>
            <person name="Rieger M."/>
            <person name="Schaefer M."/>
            <person name="Mueller-Auer S."/>
            <person name="Gabel C."/>
            <person name="Fuchs M."/>
            <person name="Duesterhoeft A."/>
            <person name="Fritzc C."/>
            <person name="Holzer E."/>
            <person name="Moestl D."/>
            <person name="Hilbert H."/>
            <person name="Borzym K."/>
            <person name="Langer I."/>
            <person name="Beck A."/>
            <person name="Lehrach H."/>
            <person name="Reinhardt R."/>
            <person name="Pohl T.M."/>
            <person name="Eger P."/>
            <person name="Zimmermann W."/>
            <person name="Wedler H."/>
            <person name="Wambutt R."/>
            <person name="Purnelle B."/>
            <person name="Goffeau A."/>
            <person name="Cadieu E."/>
            <person name="Dreano S."/>
            <person name="Gloux S."/>
            <person name="Lelaure V."/>
            <person name="Mottier S."/>
            <person name="Galibert F."/>
            <person name="Aves S.J."/>
            <person name="Xiang Z."/>
            <person name="Hunt C."/>
            <person name="Moore K."/>
            <person name="Hurst S.M."/>
            <person name="Lucas M."/>
            <person name="Rochet M."/>
            <person name="Gaillardin C."/>
            <person name="Tallada V.A."/>
            <person name="Garzon A."/>
            <person name="Thode G."/>
            <person name="Daga R.R."/>
            <person name="Cruzado L."/>
            <person name="Jimenez J."/>
            <person name="Sanchez M."/>
            <person name="del Rey F."/>
            <person name="Benito J."/>
            <person name="Dominguez A."/>
            <person name="Revuelta J.L."/>
            <person name="Moreno S."/>
            <person name="Armstrong J."/>
            <person name="Forsburg S.L."/>
            <person name="Cerutti L."/>
            <person name="Lowe T."/>
            <person name="McCombie W.R."/>
            <person name="Paulsen I."/>
            <person name="Potashkin J."/>
            <person name="Shpakovski G.V."/>
            <person name="Ussery D."/>
            <person name="Barrell B.G."/>
            <person name="Nurse P."/>
        </authorList>
    </citation>
    <scope>NUCLEOTIDE SEQUENCE [LARGE SCALE GENOMIC DNA]</scope>
    <source>
        <strain>972 / ATCC 24843</strain>
    </source>
</reference>
<reference key="2">
    <citation type="journal article" date="2008" name="J. Proteome Res.">
        <title>Phosphoproteome analysis of fission yeast.</title>
        <authorList>
            <person name="Wilson-Grady J.T."/>
            <person name="Villen J."/>
            <person name="Gygi S.P."/>
        </authorList>
    </citation>
    <scope>PHOSPHORYLATION [LARGE SCALE ANALYSIS] AT SER-31; SER-36 AND SER-37</scope>
    <scope>IDENTIFICATION BY MASS SPECTROMETRY</scope>
</reference>